<sequence length="201" mass="21963">MQTSPLLTQLMEALRCLPGVGPKSAQRMAFTLLQRDRSGGMRLAQALTRAMSEIGHCADCRTFTEQEVCNICSNPRRQENGQICVVESPADIYAIEQTGQFSGRYFVLMGHLSPLDGIGPDDIGLDRLEQRLAEEKITEVILATNPTVEGEATANYIAELCAQYDVEASRIAHGVPVGGELEMVDGTTLSHSLAGRHKIRF</sequence>
<evidence type="ECO:0000255" key="1">
    <source>
        <dbReference type="HAMAP-Rule" id="MF_00017"/>
    </source>
</evidence>
<keyword id="KW-0227">DNA damage</keyword>
<keyword id="KW-0233">DNA recombination</keyword>
<keyword id="KW-0234">DNA repair</keyword>
<keyword id="KW-0479">Metal-binding</keyword>
<keyword id="KW-1185">Reference proteome</keyword>
<keyword id="KW-0862">Zinc</keyword>
<keyword id="KW-0863">Zinc-finger</keyword>
<dbReference type="EMBL" id="CU928145">
    <property type="protein sequence ID" value="CAU96358.1"/>
    <property type="molecule type" value="Genomic_DNA"/>
</dbReference>
<dbReference type="RefSeq" id="WP_001195025.1">
    <property type="nucleotide sequence ID" value="NZ_CP028304.1"/>
</dbReference>
<dbReference type="SMR" id="B7L797"/>
<dbReference type="GeneID" id="93776978"/>
<dbReference type="KEGG" id="eck:EC55989_0485"/>
<dbReference type="HOGENOM" id="CLU_060739_1_2_6"/>
<dbReference type="Proteomes" id="UP000000746">
    <property type="component" value="Chromosome"/>
</dbReference>
<dbReference type="GO" id="GO:0003677">
    <property type="term" value="F:DNA binding"/>
    <property type="evidence" value="ECO:0007669"/>
    <property type="project" value="UniProtKB-UniRule"/>
</dbReference>
<dbReference type="GO" id="GO:0008270">
    <property type="term" value="F:zinc ion binding"/>
    <property type="evidence" value="ECO:0007669"/>
    <property type="project" value="UniProtKB-KW"/>
</dbReference>
<dbReference type="GO" id="GO:0006310">
    <property type="term" value="P:DNA recombination"/>
    <property type="evidence" value="ECO:0007669"/>
    <property type="project" value="UniProtKB-UniRule"/>
</dbReference>
<dbReference type="GO" id="GO:0006281">
    <property type="term" value="P:DNA repair"/>
    <property type="evidence" value="ECO:0007669"/>
    <property type="project" value="UniProtKB-UniRule"/>
</dbReference>
<dbReference type="CDD" id="cd01025">
    <property type="entry name" value="TOPRIM_recR"/>
    <property type="match status" value="1"/>
</dbReference>
<dbReference type="FunFam" id="1.10.8.420:FF:000001">
    <property type="entry name" value="Recombination protein RecR"/>
    <property type="match status" value="1"/>
</dbReference>
<dbReference type="FunFam" id="3.40.1360.10:FF:000001">
    <property type="entry name" value="Recombination protein RecR"/>
    <property type="match status" value="1"/>
</dbReference>
<dbReference type="Gene3D" id="3.40.1360.10">
    <property type="match status" value="1"/>
</dbReference>
<dbReference type="Gene3D" id="6.10.250.240">
    <property type="match status" value="1"/>
</dbReference>
<dbReference type="Gene3D" id="1.10.8.420">
    <property type="entry name" value="RecR Domain 1"/>
    <property type="match status" value="1"/>
</dbReference>
<dbReference type="HAMAP" id="MF_00017">
    <property type="entry name" value="RecR"/>
    <property type="match status" value="1"/>
</dbReference>
<dbReference type="InterPro" id="IPR000093">
    <property type="entry name" value="DNA_Rcmb_RecR"/>
</dbReference>
<dbReference type="InterPro" id="IPR023627">
    <property type="entry name" value="Rcmb_RecR"/>
</dbReference>
<dbReference type="InterPro" id="IPR015967">
    <property type="entry name" value="Rcmb_RecR_Znf"/>
</dbReference>
<dbReference type="InterPro" id="IPR006171">
    <property type="entry name" value="TOPRIM_dom"/>
</dbReference>
<dbReference type="InterPro" id="IPR034137">
    <property type="entry name" value="TOPRIM_RecR"/>
</dbReference>
<dbReference type="NCBIfam" id="TIGR00615">
    <property type="entry name" value="recR"/>
    <property type="match status" value="1"/>
</dbReference>
<dbReference type="PANTHER" id="PTHR30446">
    <property type="entry name" value="RECOMBINATION PROTEIN RECR"/>
    <property type="match status" value="1"/>
</dbReference>
<dbReference type="PANTHER" id="PTHR30446:SF0">
    <property type="entry name" value="RECOMBINATION PROTEIN RECR"/>
    <property type="match status" value="1"/>
</dbReference>
<dbReference type="Pfam" id="PF21175">
    <property type="entry name" value="RecR_C"/>
    <property type="match status" value="1"/>
</dbReference>
<dbReference type="Pfam" id="PF21176">
    <property type="entry name" value="RecR_HhH"/>
    <property type="match status" value="1"/>
</dbReference>
<dbReference type="Pfam" id="PF02132">
    <property type="entry name" value="RecR_ZnF"/>
    <property type="match status" value="1"/>
</dbReference>
<dbReference type="Pfam" id="PF13662">
    <property type="entry name" value="Toprim_4"/>
    <property type="match status" value="1"/>
</dbReference>
<dbReference type="SMART" id="SM00493">
    <property type="entry name" value="TOPRIM"/>
    <property type="match status" value="1"/>
</dbReference>
<dbReference type="SUPFAM" id="SSF111304">
    <property type="entry name" value="Recombination protein RecR"/>
    <property type="match status" value="1"/>
</dbReference>
<dbReference type="PROSITE" id="PS01300">
    <property type="entry name" value="RECR"/>
    <property type="match status" value="1"/>
</dbReference>
<dbReference type="PROSITE" id="PS50880">
    <property type="entry name" value="TOPRIM"/>
    <property type="match status" value="1"/>
</dbReference>
<proteinExistence type="inferred from homology"/>
<feature type="chain" id="PRO_1000195382" description="Recombination protein RecR">
    <location>
        <begin position="1"/>
        <end position="201"/>
    </location>
</feature>
<feature type="domain" description="Toprim" evidence="1">
    <location>
        <begin position="81"/>
        <end position="176"/>
    </location>
</feature>
<feature type="zinc finger region" description="C4-type" evidence="1">
    <location>
        <begin position="57"/>
        <end position="72"/>
    </location>
</feature>
<reference key="1">
    <citation type="journal article" date="2009" name="PLoS Genet.">
        <title>Organised genome dynamics in the Escherichia coli species results in highly diverse adaptive paths.</title>
        <authorList>
            <person name="Touchon M."/>
            <person name="Hoede C."/>
            <person name="Tenaillon O."/>
            <person name="Barbe V."/>
            <person name="Baeriswyl S."/>
            <person name="Bidet P."/>
            <person name="Bingen E."/>
            <person name="Bonacorsi S."/>
            <person name="Bouchier C."/>
            <person name="Bouvet O."/>
            <person name="Calteau A."/>
            <person name="Chiapello H."/>
            <person name="Clermont O."/>
            <person name="Cruveiller S."/>
            <person name="Danchin A."/>
            <person name="Diard M."/>
            <person name="Dossat C."/>
            <person name="Karoui M.E."/>
            <person name="Frapy E."/>
            <person name="Garry L."/>
            <person name="Ghigo J.M."/>
            <person name="Gilles A.M."/>
            <person name="Johnson J."/>
            <person name="Le Bouguenec C."/>
            <person name="Lescat M."/>
            <person name="Mangenot S."/>
            <person name="Martinez-Jehanne V."/>
            <person name="Matic I."/>
            <person name="Nassif X."/>
            <person name="Oztas S."/>
            <person name="Petit M.A."/>
            <person name="Pichon C."/>
            <person name="Rouy Z."/>
            <person name="Ruf C.S."/>
            <person name="Schneider D."/>
            <person name="Tourret J."/>
            <person name="Vacherie B."/>
            <person name="Vallenet D."/>
            <person name="Medigue C."/>
            <person name="Rocha E.P.C."/>
            <person name="Denamur E."/>
        </authorList>
    </citation>
    <scope>NUCLEOTIDE SEQUENCE [LARGE SCALE GENOMIC DNA]</scope>
    <source>
        <strain>55989 / EAEC</strain>
    </source>
</reference>
<protein>
    <recommendedName>
        <fullName evidence="1">Recombination protein RecR</fullName>
    </recommendedName>
</protein>
<name>RECR_ECO55</name>
<organism>
    <name type="scientific">Escherichia coli (strain 55989 / EAEC)</name>
    <dbReference type="NCBI Taxonomy" id="585055"/>
    <lineage>
        <taxon>Bacteria</taxon>
        <taxon>Pseudomonadati</taxon>
        <taxon>Pseudomonadota</taxon>
        <taxon>Gammaproteobacteria</taxon>
        <taxon>Enterobacterales</taxon>
        <taxon>Enterobacteriaceae</taxon>
        <taxon>Escherichia</taxon>
    </lineage>
</organism>
<comment type="function">
    <text evidence="1">May play a role in DNA repair. It seems to be involved in an RecBC-independent recombinational process of DNA repair. It may act with RecF and RecO.</text>
</comment>
<comment type="similarity">
    <text evidence="1">Belongs to the RecR family.</text>
</comment>
<gene>
    <name evidence="1" type="primary">recR</name>
    <name type="ordered locus">EC55989_0485</name>
</gene>
<accession>B7L797</accession>